<gene>
    <name evidence="1" type="primary">fliW</name>
    <name type="ordered locus">DVU_0522</name>
</gene>
<proteinExistence type="evidence at protein level"/>
<name>FLIW_NITV2</name>
<feature type="chain" id="PRO_0000272987" description="Flagellar assembly factor FliW">
    <location>
        <begin position="1"/>
        <end position="173"/>
    </location>
</feature>
<feature type="region of interest" description="Disordered" evidence="2">
    <location>
        <begin position="152"/>
        <end position="173"/>
    </location>
</feature>
<reference key="1">
    <citation type="journal article" date="2004" name="Nat. Biotechnol.">
        <title>The genome sequence of the anaerobic, sulfate-reducing bacterium Desulfovibrio vulgaris Hildenborough.</title>
        <authorList>
            <person name="Heidelberg J.F."/>
            <person name="Seshadri R."/>
            <person name="Haveman S.A."/>
            <person name="Hemme C.L."/>
            <person name="Paulsen I.T."/>
            <person name="Kolonay J.F."/>
            <person name="Eisen J.A."/>
            <person name="Ward N.L."/>
            <person name="Methe B.A."/>
            <person name="Brinkac L.M."/>
            <person name="Daugherty S.C."/>
            <person name="DeBoy R.T."/>
            <person name="Dodson R.J."/>
            <person name="Durkin A.S."/>
            <person name="Madupu R."/>
            <person name="Nelson W.C."/>
            <person name="Sullivan S.A."/>
            <person name="Fouts D.E."/>
            <person name="Haft D.H."/>
            <person name="Selengut J."/>
            <person name="Peterson J.D."/>
            <person name="Davidsen T.M."/>
            <person name="Zafar N."/>
            <person name="Zhou L."/>
            <person name="Radune D."/>
            <person name="Dimitrov G."/>
            <person name="Hance M."/>
            <person name="Tran K."/>
            <person name="Khouri H.M."/>
            <person name="Gill J."/>
            <person name="Utterback T.R."/>
            <person name="Feldblyum T.V."/>
            <person name="Wall J.D."/>
            <person name="Voordouw G."/>
            <person name="Fraser C.M."/>
        </authorList>
    </citation>
    <scope>NUCLEOTIDE SEQUENCE [LARGE SCALE GENOMIC DNA]</scope>
    <source>
        <strain>ATCC 29579 / DSM 644 / CCUG 34227 / NCIMB 8303 / VKM B-1760 / Hildenborough</strain>
    </source>
</reference>
<keyword id="KW-1005">Bacterial flagellum biogenesis</keyword>
<keyword id="KW-0143">Chaperone</keyword>
<keyword id="KW-0963">Cytoplasm</keyword>
<keyword id="KW-1185">Reference proteome</keyword>
<keyword id="KW-0810">Translation regulation</keyword>
<dbReference type="EMBL" id="AE017285">
    <property type="protein sequence ID" value="AAS95004.1"/>
    <property type="molecule type" value="Genomic_DNA"/>
</dbReference>
<dbReference type="RefSeq" id="WP_010937828.1">
    <property type="nucleotide sequence ID" value="NC_002937.3"/>
</dbReference>
<dbReference type="RefSeq" id="YP_009745.1">
    <property type="nucleotide sequence ID" value="NC_002937.3"/>
</dbReference>
<dbReference type="SMR" id="Q72EP7"/>
<dbReference type="IntAct" id="Q72EP7">
    <property type="interactions" value="4"/>
</dbReference>
<dbReference type="STRING" id="882.DVU_0522"/>
<dbReference type="PaxDb" id="882-DVU_0522"/>
<dbReference type="EnsemblBacteria" id="AAS95004">
    <property type="protein sequence ID" value="AAS95004"/>
    <property type="gene ID" value="DVU_0522"/>
</dbReference>
<dbReference type="KEGG" id="dvu:DVU_0522"/>
<dbReference type="PATRIC" id="fig|882.5.peg.499"/>
<dbReference type="eggNOG" id="COG1699">
    <property type="taxonomic scope" value="Bacteria"/>
</dbReference>
<dbReference type="HOGENOM" id="CLU_112356_0_2_7"/>
<dbReference type="OrthoDB" id="9801235at2"/>
<dbReference type="PhylomeDB" id="Q72EP7"/>
<dbReference type="Proteomes" id="UP000002194">
    <property type="component" value="Chromosome"/>
</dbReference>
<dbReference type="GO" id="GO:0005737">
    <property type="term" value="C:cytoplasm"/>
    <property type="evidence" value="ECO:0007669"/>
    <property type="project" value="UniProtKB-SubCell"/>
</dbReference>
<dbReference type="GO" id="GO:0044780">
    <property type="term" value="P:bacterial-type flagellum assembly"/>
    <property type="evidence" value="ECO:0007669"/>
    <property type="project" value="UniProtKB-UniRule"/>
</dbReference>
<dbReference type="GO" id="GO:0006417">
    <property type="term" value="P:regulation of translation"/>
    <property type="evidence" value="ECO:0007669"/>
    <property type="project" value="UniProtKB-KW"/>
</dbReference>
<dbReference type="Gene3D" id="2.30.290.10">
    <property type="entry name" value="BH3618-like"/>
    <property type="match status" value="1"/>
</dbReference>
<dbReference type="HAMAP" id="MF_01185">
    <property type="entry name" value="FliW"/>
    <property type="match status" value="1"/>
</dbReference>
<dbReference type="InterPro" id="IPR003775">
    <property type="entry name" value="Flagellar_assembly_factor_FliW"/>
</dbReference>
<dbReference type="InterPro" id="IPR024046">
    <property type="entry name" value="Flagellar_assmbl_FliW_dom_sf"/>
</dbReference>
<dbReference type="NCBIfam" id="NF009793">
    <property type="entry name" value="PRK13285.1-1"/>
    <property type="match status" value="1"/>
</dbReference>
<dbReference type="PANTHER" id="PTHR39190">
    <property type="entry name" value="FLAGELLAR ASSEMBLY FACTOR FLIW"/>
    <property type="match status" value="1"/>
</dbReference>
<dbReference type="PANTHER" id="PTHR39190:SF1">
    <property type="entry name" value="FLAGELLAR ASSEMBLY FACTOR FLIW"/>
    <property type="match status" value="1"/>
</dbReference>
<dbReference type="Pfam" id="PF02623">
    <property type="entry name" value="FliW"/>
    <property type="match status" value="1"/>
</dbReference>
<dbReference type="SUPFAM" id="SSF141457">
    <property type="entry name" value="BH3618-like"/>
    <property type="match status" value="1"/>
</dbReference>
<evidence type="ECO:0000255" key="1">
    <source>
        <dbReference type="HAMAP-Rule" id="MF_01185"/>
    </source>
</evidence>
<evidence type="ECO:0000256" key="2">
    <source>
        <dbReference type="SAM" id="MobiDB-lite"/>
    </source>
</evidence>
<accession>Q72EP7</accession>
<comment type="function">
    <text evidence="1">Acts as an anti-CsrA protein, binds CsrA and prevents it from repressing translation of its target genes, one of which is flagellin. Binds to flagellin and participates in the assembly of the flagellum.</text>
</comment>
<comment type="subunit">
    <text evidence="1">Interacts with translational regulator CsrA and flagellin(s).</text>
</comment>
<comment type="interaction">
    <interactant intactId="EBI-10067084">
        <id>Q72EP7</id>
    </interactant>
    <interactant intactId="EBI-10067088">
        <id>Q729A8</id>
        <label>DVU_2444</label>
    </interactant>
    <organismsDiffer>false</organismsDiffer>
    <experiments>2</experiments>
</comment>
<comment type="subcellular location">
    <subcellularLocation>
        <location evidence="1">Cytoplasm</location>
    </subcellularLocation>
</comment>
<comment type="similarity">
    <text evidence="1">Belongs to the FliW family.</text>
</comment>
<protein>
    <recommendedName>
        <fullName evidence="1">Flagellar assembly factor FliW</fullName>
    </recommendedName>
</protein>
<organism>
    <name type="scientific">Nitratidesulfovibrio vulgaris (strain ATCC 29579 / DSM 644 / CCUG 34227 / NCIMB 8303 / VKM B-1760 / Hildenborough)</name>
    <name type="common">Desulfovibrio vulgaris</name>
    <dbReference type="NCBI Taxonomy" id="882"/>
    <lineage>
        <taxon>Bacteria</taxon>
        <taxon>Pseudomonadati</taxon>
        <taxon>Thermodesulfobacteriota</taxon>
        <taxon>Desulfovibrionia</taxon>
        <taxon>Desulfovibrionales</taxon>
        <taxon>Desulfovibrionaceae</taxon>
        <taxon>Nitratidesulfovibrio</taxon>
    </lineage>
</organism>
<sequence length="173" mass="19166">MARQNEIEIQTRIGRQRITLDKIIHFPRGLAGFEGRHDFTLLQLREGAPFLVLQSLDDPGLGLLVADPYSFLTDYQIRVGDPEQRLLKLENIRQVAVLVTVSIPAGQPEKTALNLTGPILINHRARIGLQVPQTDASLPPQFYLHMDDANGSTTVRRKASPPAAGEDKGDVQE</sequence>